<proteinExistence type="evidence at protein level"/>
<comment type="function">
    <text evidence="1 5">Positive regulator of the Wnt signaling pathway. Specifically cleaves 'Lys-63'-linked ubiquitin chains. May act by deubiquitinating APC protein, a negative regulator of Wnt-mediated transcription (By similarity). Required for an efficient wg response, but not for other signaling responses, in the eye.</text>
</comment>
<comment type="catalytic activity">
    <reaction>
        <text>Thiol-dependent hydrolysis of ester, thioester, amide, peptide and isopeptide bonds formed by the C-terminal Gly of ubiquitin (a 76-residue protein attached to proteins as an intracellular targeting signal).</text>
        <dbReference type="EC" id="3.4.19.12"/>
    </reaction>
</comment>
<comment type="subunit">
    <text evidence="5">Interacts with Apc.</text>
</comment>
<comment type="domain">
    <text evidence="1">The OTU domain mediates the deubiquitinating activity.</text>
</comment>
<comment type="domain">
    <text evidence="1">The RanBP2-type zinc fingers mediate the specific interaction with 'Lys-63'-linked ubiquitin.</text>
</comment>
<comment type="disruption phenotype">
    <text evidence="5">Flies are viable and fertile, suggesting functional redundancy.</text>
</comment>
<comment type="similarity">
    <text evidence="7">Belongs to the peptidase C64 family.</text>
</comment>
<comment type="sequence caution" evidence="7">
    <conflict type="erroneous initiation">
        <sequence resource="EMBL-CDS" id="AAL39403"/>
    </conflict>
</comment>
<evidence type="ECO:0000250" key="1"/>
<evidence type="ECO:0000255" key="2">
    <source>
        <dbReference type="PROSITE-ProRule" id="PRU00139"/>
    </source>
</evidence>
<evidence type="ECO:0000255" key="3">
    <source>
        <dbReference type="PROSITE-ProRule" id="PRU00322"/>
    </source>
</evidence>
<evidence type="ECO:0000256" key="4">
    <source>
        <dbReference type="SAM" id="MobiDB-lite"/>
    </source>
</evidence>
<evidence type="ECO:0000269" key="5">
    <source>
    </source>
</evidence>
<evidence type="ECO:0000269" key="6">
    <source>
    </source>
</evidence>
<evidence type="ECO:0000305" key="7"/>
<accession>Q9VH90</accession>
<accession>Q8T9K1</accession>
<feature type="chain" id="PRO_0000361559" description="Ubiquitin thioesterase trabid">
    <location>
        <begin position="1"/>
        <end position="778"/>
    </location>
</feature>
<feature type="domain" description="OTU" evidence="2">
    <location>
        <begin position="507"/>
        <end position="665"/>
    </location>
</feature>
<feature type="zinc finger region" description="RanBP2-type 1" evidence="3">
    <location>
        <begin position="5"/>
        <end position="36"/>
    </location>
</feature>
<feature type="zinc finger region" description="RanBP2-type 2" evidence="3">
    <location>
        <begin position="89"/>
        <end position="118"/>
    </location>
</feature>
<feature type="zinc finger region" description="RanBP2-type 3" evidence="3">
    <location>
        <begin position="232"/>
        <end position="261"/>
    </location>
</feature>
<feature type="region of interest" description="Disordered" evidence="4">
    <location>
        <begin position="187"/>
        <end position="226"/>
    </location>
</feature>
<feature type="region of interest" description="Disordered" evidence="4">
    <location>
        <begin position="265"/>
        <end position="290"/>
    </location>
</feature>
<feature type="compositionally biased region" description="Polar residues" evidence="4">
    <location>
        <begin position="187"/>
        <end position="197"/>
    </location>
</feature>
<feature type="compositionally biased region" description="Low complexity" evidence="4">
    <location>
        <begin position="198"/>
        <end position="226"/>
    </location>
</feature>
<feature type="compositionally biased region" description="Low complexity" evidence="4">
    <location>
        <begin position="273"/>
        <end position="288"/>
    </location>
</feature>
<feature type="active site" description="Nucleophile" evidence="1">
    <location>
        <position position="518"/>
    </location>
</feature>
<feature type="active site" description="Proton acceptor" evidence="1">
    <location>
        <position position="658"/>
    </location>
</feature>
<feature type="modified residue" description="Phosphoserine" evidence="6">
    <location>
        <position position="770"/>
    </location>
</feature>
<feature type="modified residue" description="Phosphoserine" evidence="6">
    <location>
        <position position="771"/>
    </location>
</feature>
<feature type="modified residue" description="Phosphoserine" evidence="6">
    <location>
        <position position="775"/>
    </location>
</feature>
<dbReference type="EC" id="3.4.19.12"/>
<dbReference type="EMBL" id="AE014297">
    <property type="protein sequence ID" value="AAF54429.1"/>
    <property type="molecule type" value="Genomic_DNA"/>
</dbReference>
<dbReference type="EMBL" id="AY058438">
    <property type="protein sequence ID" value="AAL13667.1"/>
    <property type="molecule type" value="mRNA"/>
</dbReference>
<dbReference type="EMBL" id="AY069258">
    <property type="protein sequence ID" value="AAL39403.1"/>
    <property type="status" value="ALT_INIT"/>
    <property type="molecule type" value="mRNA"/>
</dbReference>
<dbReference type="RefSeq" id="NP_649931.1">
    <property type="nucleotide sequence ID" value="NM_141674.3"/>
</dbReference>
<dbReference type="SMR" id="Q9VH90"/>
<dbReference type="BioGRID" id="66338">
    <property type="interactions" value="28"/>
</dbReference>
<dbReference type="FunCoup" id="Q9VH90">
    <property type="interactions" value="1947"/>
</dbReference>
<dbReference type="IntAct" id="Q9VH90">
    <property type="interactions" value="16"/>
</dbReference>
<dbReference type="STRING" id="7227.FBpp0081569"/>
<dbReference type="MEROPS" id="C64.004"/>
<dbReference type="GlyGen" id="Q9VH90">
    <property type="glycosylation" value="1 site"/>
</dbReference>
<dbReference type="iPTMnet" id="Q9VH90"/>
<dbReference type="PaxDb" id="7227-FBpp0081569"/>
<dbReference type="DNASU" id="41179"/>
<dbReference type="EnsemblMetazoa" id="FBtr0082091">
    <property type="protein sequence ID" value="FBpp0081569"/>
    <property type="gene ID" value="FBgn0037734"/>
</dbReference>
<dbReference type="GeneID" id="41179"/>
<dbReference type="KEGG" id="dme:Dmel_CG9448"/>
<dbReference type="UCSC" id="CG9448-RA">
    <property type="organism name" value="d. melanogaster"/>
</dbReference>
<dbReference type="AGR" id="FB:FBgn0037734"/>
<dbReference type="CTD" id="41179"/>
<dbReference type="FlyBase" id="FBgn0037734">
    <property type="gene designation" value="trbd"/>
</dbReference>
<dbReference type="VEuPathDB" id="VectorBase:FBgn0037734"/>
<dbReference type="eggNOG" id="KOG4345">
    <property type="taxonomic scope" value="Eukaryota"/>
</dbReference>
<dbReference type="GeneTree" id="ENSGT00940000158045"/>
<dbReference type="HOGENOM" id="CLU_013907_0_0_1"/>
<dbReference type="InParanoid" id="Q9VH90"/>
<dbReference type="OMA" id="MCDTKDD"/>
<dbReference type="OrthoDB" id="6275030at2759"/>
<dbReference type="PhylomeDB" id="Q9VH90"/>
<dbReference type="Reactome" id="R-DME-195253">
    <property type="pathway name" value="Degradation of beta-catenin by the destruction complex"/>
</dbReference>
<dbReference type="Reactome" id="R-DME-5689896">
    <property type="pathway name" value="Ovarian tumor domain proteases"/>
</dbReference>
<dbReference type="SignaLink" id="Q9VH90"/>
<dbReference type="BioGRID-ORCS" id="41179">
    <property type="hits" value="0 hits in 1 CRISPR screen"/>
</dbReference>
<dbReference type="CD-CODE" id="0BB92809">
    <property type="entry name" value="Trbd"/>
</dbReference>
<dbReference type="GenomeRNAi" id="41179"/>
<dbReference type="PRO" id="PR:Q9VH90"/>
<dbReference type="Proteomes" id="UP000000803">
    <property type="component" value="Chromosome 3R"/>
</dbReference>
<dbReference type="Bgee" id="FBgn0037734">
    <property type="expression patterns" value="Expressed in indirect flight muscle cell (Drosophila) in post-embryonic organism and 132 other cell types or tissues"/>
</dbReference>
<dbReference type="GO" id="GO:0005737">
    <property type="term" value="C:cytoplasm"/>
    <property type="evidence" value="ECO:0000250"/>
    <property type="project" value="FlyBase"/>
</dbReference>
<dbReference type="GO" id="GO:0005634">
    <property type="term" value="C:nucleus"/>
    <property type="evidence" value="ECO:0000250"/>
    <property type="project" value="FlyBase"/>
</dbReference>
<dbReference type="GO" id="GO:0004843">
    <property type="term" value="F:cysteine-type deubiquitinase activity"/>
    <property type="evidence" value="ECO:0000250"/>
    <property type="project" value="UniProtKB"/>
</dbReference>
<dbReference type="GO" id="GO:0061578">
    <property type="term" value="F:K63-linked deubiquitinase activity"/>
    <property type="evidence" value="ECO:0000314"/>
    <property type="project" value="FlyBase"/>
</dbReference>
<dbReference type="GO" id="GO:0070530">
    <property type="term" value="F:K63-linked polyubiquitin modification-dependent protein binding"/>
    <property type="evidence" value="ECO:0000318"/>
    <property type="project" value="GO_Central"/>
</dbReference>
<dbReference type="GO" id="GO:0008270">
    <property type="term" value="F:zinc ion binding"/>
    <property type="evidence" value="ECO:0007669"/>
    <property type="project" value="UniProtKB-KW"/>
</dbReference>
<dbReference type="GO" id="GO:0016477">
    <property type="term" value="P:cell migration"/>
    <property type="evidence" value="ECO:0000318"/>
    <property type="project" value="GO_Central"/>
</dbReference>
<dbReference type="GO" id="GO:0007010">
    <property type="term" value="P:cytoskeleton organization"/>
    <property type="evidence" value="ECO:0000318"/>
    <property type="project" value="GO_Central"/>
</dbReference>
<dbReference type="GO" id="GO:0061060">
    <property type="term" value="P:negative regulation of peptidoglycan recognition protein signaling pathway"/>
    <property type="evidence" value="ECO:0000315"/>
    <property type="project" value="FlyBase"/>
</dbReference>
<dbReference type="GO" id="GO:0090263">
    <property type="term" value="P:positive regulation of canonical Wnt signaling pathway"/>
    <property type="evidence" value="ECO:0000316"/>
    <property type="project" value="FlyBase"/>
</dbReference>
<dbReference type="GO" id="GO:0030177">
    <property type="term" value="P:positive regulation of Wnt signaling pathway"/>
    <property type="evidence" value="ECO:0000315"/>
    <property type="project" value="UniProtKB"/>
</dbReference>
<dbReference type="GO" id="GO:0071947">
    <property type="term" value="P:protein deubiquitination involved in ubiquitin-dependent protein catabolic process"/>
    <property type="evidence" value="ECO:0000318"/>
    <property type="project" value="GO_Central"/>
</dbReference>
<dbReference type="GO" id="GO:0070536">
    <property type="term" value="P:protein K63-linked deubiquitination"/>
    <property type="evidence" value="ECO:0000250"/>
    <property type="project" value="UniProtKB"/>
</dbReference>
<dbReference type="GO" id="GO:0016055">
    <property type="term" value="P:Wnt signaling pathway"/>
    <property type="evidence" value="ECO:0007669"/>
    <property type="project" value="UniProtKB-KW"/>
</dbReference>
<dbReference type="CDD" id="cd22767">
    <property type="entry name" value="OTU_ZRANB1"/>
    <property type="match status" value="1"/>
</dbReference>
<dbReference type="FunFam" id="1.25.40.560:FF:000002">
    <property type="entry name" value="Ubiquitin thioesterase trabid"/>
    <property type="match status" value="1"/>
</dbReference>
<dbReference type="FunFam" id="2.30.30.380:FF:000030">
    <property type="entry name" value="Ubiquitin thioesterase trabid"/>
    <property type="match status" value="1"/>
</dbReference>
<dbReference type="FunFam" id="4.10.1060.10:FF:000029">
    <property type="entry name" value="ubiquitin thioesterase trabid"/>
    <property type="match status" value="1"/>
</dbReference>
<dbReference type="Gene3D" id="1.25.40.560">
    <property type="match status" value="1"/>
</dbReference>
<dbReference type="Gene3D" id="4.10.1060.10">
    <property type="entry name" value="Zinc finger, RanBP2-type"/>
    <property type="match status" value="2"/>
</dbReference>
<dbReference type="Gene3D" id="2.30.30.380">
    <property type="entry name" value="Zn-finger domain of Sec23/24"/>
    <property type="match status" value="1"/>
</dbReference>
<dbReference type="InterPro" id="IPR041294">
    <property type="entry name" value="AnkUBD"/>
</dbReference>
<dbReference type="InterPro" id="IPR051346">
    <property type="entry name" value="OTU_Deubiquitinase"/>
</dbReference>
<dbReference type="InterPro" id="IPR003323">
    <property type="entry name" value="OTU_dom"/>
</dbReference>
<dbReference type="InterPro" id="IPR001876">
    <property type="entry name" value="Znf_RanBP2"/>
</dbReference>
<dbReference type="InterPro" id="IPR036443">
    <property type="entry name" value="Znf_RanBP2_sf"/>
</dbReference>
<dbReference type="InterPro" id="IPR049768">
    <property type="entry name" value="ZRANB1_OTU"/>
</dbReference>
<dbReference type="PANTHER" id="PTHR13367">
    <property type="entry name" value="UBIQUITIN THIOESTERASE"/>
    <property type="match status" value="1"/>
</dbReference>
<dbReference type="PANTHER" id="PTHR13367:SF28">
    <property type="entry name" value="UBIQUITIN THIOESTERASE ZRANB1"/>
    <property type="match status" value="1"/>
</dbReference>
<dbReference type="Pfam" id="PF18418">
    <property type="entry name" value="AnkUBD"/>
    <property type="match status" value="1"/>
</dbReference>
<dbReference type="Pfam" id="PF02338">
    <property type="entry name" value="OTU"/>
    <property type="match status" value="1"/>
</dbReference>
<dbReference type="Pfam" id="PF00641">
    <property type="entry name" value="Zn_ribbon_RanBP"/>
    <property type="match status" value="1"/>
</dbReference>
<dbReference type="SMART" id="SM00547">
    <property type="entry name" value="ZnF_RBZ"/>
    <property type="match status" value="3"/>
</dbReference>
<dbReference type="SUPFAM" id="SSF90209">
    <property type="entry name" value="Ran binding protein zinc finger-like"/>
    <property type="match status" value="1"/>
</dbReference>
<dbReference type="PROSITE" id="PS50802">
    <property type="entry name" value="OTU"/>
    <property type="match status" value="1"/>
</dbReference>
<dbReference type="PROSITE" id="PS01358">
    <property type="entry name" value="ZF_RANBP2_1"/>
    <property type="match status" value="3"/>
</dbReference>
<dbReference type="PROSITE" id="PS50199">
    <property type="entry name" value="ZF_RANBP2_2"/>
    <property type="match status" value="3"/>
</dbReference>
<keyword id="KW-0378">Hydrolase</keyword>
<keyword id="KW-0479">Metal-binding</keyword>
<keyword id="KW-0597">Phosphoprotein</keyword>
<keyword id="KW-0645">Protease</keyword>
<keyword id="KW-1185">Reference proteome</keyword>
<keyword id="KW-0677">Repeat</keyword>
<keyword id="KW-0788">Thiol protease</keyword>
<keyword id="KW-0833">Ubl conjugation pathway</keyword>
<keyword id="KW-0879">Wnt signaling pathway</keyword>
<keyword id="KW-0862">Zinc</keyword>
<keyword id="KW-0863">Zinc-finger</keyword>
<protein>
    <recommendedName>
        <fullName>Ubiquitin thioesterase trabid</fullName>
        <shortName>dTrbd</shortName>
        <ecNumber>3.4.19.12</ecNumber>
    </recommendedName>
</protein>
<name>TRBID_DROME</name>
<organism>
    <name type="scientific">Drosophila melanogaster</name>
    <name type="common">Fruit fly</name>
    <dbReference type="NCBI Taxonomy" id="7227"/>
    <lineage>
        <taxon>Eukaryota</taxon>
        <taxon>Metazoa</taxon>
        <taxon>Ecdysozoa</taxon>
        <taxon>Arthropoda</taxon>
        <taxon>Hexapoda</taxon>
        <taxon>Insecta</taxon>
        <taxon>Pterygota</taxon>
        <taxon>Neoptera</taxon>
        <taxon>Endopterygota</taxon>
        <taxon>Diptera</taxon>
        <taxon>Brachycera</taxon>
        <taxon>Muscomorpha</taxon>
        <taxon>Ephydroidea</taxon>
        <taxon>Drosophilidae</taxon>
        <taxon>Drosophila</taxon>
        <taxon>Sophophora</taxon>
    </lineage>
</organism>
<sequence length="778" mass="88199">MCDTKDDAQKWKCETCTYENYPSSLKCTMCQASKPLLNEDIFRLSPAQESCTVAEEAAAVEVAVMSPTPSSTCYSLQPQSQARQSNVADSEKWPCKVCTYLNWPRSLRCVQCCTKRGGEAIERGKKDMDNEADGDRAGEALQALRISGSEENLANKPVQLIGATASHRLSLSRGIDDATHLNNLANASHNQSQSQHRQPVLQQQMQLQLQPQQQRESSSSAAVPPQQQKQCYVSKWACNSCTYENWPRSIKCSMCGKTREREISGSQNDLHASSSLNSQEENQQQLQQPNVDTVSVNNSFNKKHIYQLGSSETINNCDTLQERQERRQRQIRRQVDWQWLNACLGVVENNYSAVEAYLSCGGNPARSLTSTEIAALNRNSAFDVGHTLIHLAIRFHREEMLPMLLDQISGSGPGIKRVPSYVAPDLAADIRRHFANTLRLRKSGLPCHYVQKHATFALPAEIEELPIPIQEQLYDELLDRDAQKQLETPPPALNWSLEITARLSSRMFVLWNRSAGDCLLDSAMQATWGVFDRDNILRRALADTLHQCGHVFFTRWKEYEMLQASMLHFTLEDSQFEEDWSTLLSLAGQPGSSLEQLHIFALAHILRRPIIVYGVKYVKSFRGEDIGYARFEGVYLPLFWDQNFCTKSPIALGYTRGHFSALVPMEPFTRIDGRRDDVEDVTYLPLMDCELKLLPIHFLTQSEVGNEESMMRQWLDVCVTDGGLLVAQQKLSKRPLLVAQMLEEWLNHYRRIAQVITAPFIRRPQITHYSSDGDSDEE</sequence>
<gene>
    <name type="primary">trbd</name>
    <name type="ORF">CG9448</name>
</gene>
<reference key="1">
    <citation type="journal article" date="2000" name="Science">
        <title>The genome sequence of Drosophila melanogaster.</title>
        <authorList>
            <person name="Adams M.D."/>
            <person name="Celniker S.E."/>
            <person name="Holt R.A."/>
            <person name="Evans C.A."/>
            <person name="Gocayne J.D."/>
            <person name="Amanatides P.G."/>
            <person name="Scherer S.E."/>
            <person name="Li P.W."/>
            <person name="Hoskins R.A."/>
            <person name="Galle R.F."/>
            <person name="George R.A."/>
            <person name="Lewis S.E."/>
            <person name="Richards S."/>
            <person name="Ashburner M."/>
            <person name="Henderson S.N."/>
            <person name="Sutton G.G."/>
            <person name="Wortman J.R."/>
            <person name="Yandell M.D."/>
            <person name="Zhang Q."/>
            <person name="Chen L.X."/>
            <person name="Brandon R.C."/>
            <person name="Rogers Y.-H.C."/>
            <person name="Blazej R.G."/>
            <person name="Champe M."/>
            <person name="Pfeiffer B.D."/>
            <person name="Wan K.H."/>
            <person name="Doyle C."/>
            <person name="Baxter E.G."/>
            <person name="Helt G."/>
            <person name="Nelson C.R."/>
            <person name="Miklos G.L.G."/>
            <person name="Abril J.F."/>
            <person name="Agbayani A."/>
            <person name="An H.-J."/>
            <person name="Andrews-Pfannkoch C."/>
            <person name="Baldwin D."/>
            <person name="Ballew R.M."/>
            <person name="Basu A."/>
            <person name="Baxendale J."/>
            <person name="Bayraktaroglu L."/>
            <person name="Beasley E.M."/>
            <person name="Beeson K.Y."/>
            <person name="Benos P.V."/>
            <person name="Berman B.P."/>
            <person name="Bhandari D."/>
            <person name="Bolshakov S."/>
            <person name="Borkova D."/>
            <person name="Botchan M.R."/>
            <person name="Bouck J."/>
            <person name="Brokstein P."/>
            <person name="Brottier P."/>
            <person name="Burtis K.C."/>
            <person name="Busam D.A."/>
            <person name="Butler H."/>
            <person name="Cadieu E."/>
            <person name="Center A."/>
            <person name="Chandra I."/>
            <person name="Cherry J.M."/>
            <person name="Cawley S."/>
            <person name="Dahlke C."/>
            <person name="Davenport L.B."/>
            <person name="Davies P."/>
            <person name="de Pablos B."/>
            <person name="Delcher A."/>
            <person name="Deng Z."/>
            <person name="Mays A.D."/>
            <person name="Dew I."/>
            <person name="Dietz S.M."/>
            <person name="Dodson K."/>
            <person name="Doup L.E."/>
            <person name="Downes M."/>
            <person name="Dugan-Rocha S."/>
            <person name="Dunkov B.C."/>
            <person name="Dunn P."/>
            <person name="Durbin K.J."/>
            <person name="Evangelista C.C."/>
            <person name="Ferraz C."/>
            <person name="Ferriera S."/>
            <person name="Fleischmann W."/>
            <person name="Fosler C."/>
            <person name="Gabrielian A.E."/>
            <person name="Garg N.S."/>
            <person name="Gelbart W.M."/>
            <person name="Glasser K."/>
            <person name="Glodek A."/>
            <person name="Gong F."/>
            <person name="Gorrell J.H."/>
            <person name="Gu Z."/>
            <person name="Guan P."/>
            <person name="Harris M."/>
            <person name="Harris N.L."/>
            <person name="Harvey D.A."/>
            <person name="Heiman T.J."/>
            <person name="Hernandez J.R."/>
            <person name="Houck J."/>
            <person name="Hostin D."/>
            <person name="Houston K.A."/>
            <person name="Howland T.J."/>
            <person name="Wei M.-H."/>
            <person name="Ibegwam C."/>
            <person name="Jalali M."/>
            <person name="Kalush F."/>
            <person name="Karpen G.H."/>
            <person name="Ke Z."/>
            <person name="Kennison J.A."/>
            <person name="Ketchum K.A."/>
            <person name="Kimmel B.E."/>
            <person name="Kodira C.D."/>
            <person name="Kraft C.L."/>
            <person name="Kravitz S."/>
            <person name="Kulp D."/>
            <person name="Lai Z."/>
            <person name="Lasko P."/>
            <person name="Lei Y."/>
            <person name="Levitsky A.A."/>
            <person name="Li J.H."/>
            <person name="Li Z."/>
            <person name="Liang Y."/>
            <person name="Lin X."/>
            <person name="Liu X."/>
            <person name="Mattei B."/>
            <person name="McIntosh T.C."/>
            <person name="McLeod M.P."/>
            <person name="McPherson D."/>
            <person name="Merkulov G."/>
            <person name="Milshina N.V."/>
            <person name="Mobarry C."/>
            <person name="Morris J."/>
            <person name="Moshrefi A."/>
            <person name="Mount S.M."/>
            <person name="Moy M."/>
            <person name="Murphy B."/>
            <person name="Murphy L."/>
            <person name="Muzny D.M."/>
            <person name="Nelson D.L."/>
            <person name="Nelson D.R."/>
            <person name="Nelson K.A."/>
            <person name="Nixon K."/>
            <person name="Nusskern D.R."/>
            <person name="Pacleb J.M."/>
            <person name="Palazzolo M."/>
            <person name="Pittman G.S."/>
            <person name="Pan S."/>
            <person name="Pollard J."/>
            <person name="Puri V."/>
            <person name="Reese M.G."/>
            <person name="Reinert K."/>
            <person name="Remington K."/>
            <person name="Saunders R.D.C."/>
            <person name="Scheeler F."/>
            <person name="Shen H."/>
            <person name="Shue B.C."/>
            <person name="Siden-Kiamos I."/>
            <person name="Simpson M."/>
            <person name="Skupski M.P."/>
            <person name="Smith T.J."/>
            <person name="Spier E."/>
            <person name="Spradling A.C."/>
            <person name="Stapleton M."/>
            <person name="Strong R."/>
            <person name="Sun E."/>
            <person name="Svirskas R."/>
            <person name="Tector C."/>
            <person name="Turner R."/>
            <person name="Venter E."/>
            <person name="Wang A.H."/>
            <person name="Wang X."/>
            <person name="Wang Z.-Y."/>
            <person name="Wassarman D.A."/>
            <person name="Weinstock G.M."/>
            <person name="Weissenbach J."/>
            <person name="Williams S.M."/>
            <person name="Woodage T."/>
            <person name="Worley K.C."/>
            <person name="Wu D."/>
            <person name="Yang S."/>
            <person name="Yao Q.A."/>
            <person name="Ye J."/>
            <person name="Yeh R.-F."/>
            <person name="Zaveri J.S."/>
            <person name="Zhan M."/>
            <person name="Zhang G."/>
            <person name="Zhao Q."/>
            <person name="Zheng L."/>
            <person name="Zheng X.H."/>
            <person name="Zhong F.N."/>
            <person name="Zhong W."/>
            <person name="Zhou X."/>
            <person name="Zhu S.C."/>
            <person name="Zhu X."/>
            <person name="Smith H.O."/>
            <person name="Gibbs R.A."/>
            <person name="Myers E.W."/>
            <person name="Rubin G.M."/>
            <person name="Venter J.C."/>
        </authorList>
    </citation>
    <scope>NUCLEOTIDE SEQUENCE [LARGE SCALE GENOMIC DNA]</scope>
    <source>
        <strain>Berkeley</strain>
    </source>
</reference>
<reference key="2">
    <citation type="journal article" date="2002" name="Genome Biol.">
        <title>Annotation of the Drosophila melanogaster euchromatic genome: a systematic review.</title>
        <authorList>
            <person name="Misra S."/>
            <person name="Crosby M.A."/>
            <person name="Mungall C.J."/>
            <person name="Matthews B.B."/>
            <person name="Campbell K.S."/>
            <person name="Hradecky P."/>
            <person name="Huang Y."/>
            <person name="Kaminker J.S."/>
            <person name="Millburn G.H."/>
            <person name="Prochnik S.E."/>
            <person name="Smith C.D."/>
            <person name="Tupy J.L."/>
            <person name="Whitfield E.J."/>
            <person name="Bayraktaroglu L."/>
            <person name="Berman B.P."/>
            <person name="Bettencourt B.R."/>
            <person name="Celniker S.E."/>
            <person name="de Grey A.D.N.J."/>
            <person name="Drysdale R.A."/>
            <person name="Harris N.L."/>
            <person name="Richter J."/>
            <person name="Russo S."/>
            <person name="Schroeder A.J."/>
            <person name="Shu S.Q."/>
            <person name="Stapleton M."/>
            <person name="Yamada C."/>
            <person name="Ashburner M."/>
            <person name="Gelbart W.M."/>
            <person name="Rubin G.M."/>
            <person name="Lewis S.E."/>
        </authorList>
    </citation>
    <scope>GENOME REANNOTATION</scope>
    <source>
        <strain>Berkeley</strain>
    </source>
</reference>
<reference key="3">
    <citation type="journal article" date="2002" name="Genome Biol.">
        <title>A Drosophila full-length cDNA resource.</title>
        <authorList>
            <person name="Stapleton M."/>
            <person name="Carlson J.W."/>
            <person name="Brokstein P."/>
            <person name="Yu C."/>
            <person name="Champe M."/>
            <person name="George R.A."/>
            <person name="Guarin H."/>
            <person name="Kronmiller B."/>
            <person name="Pacleb J.M."/>
            <person name="Park S."/>
            <person name="Wan K.H."/>
            <person name="Rubin G.M."/>
            <person name="Celniker S.E."/>
        </authorList>
    </citation>
    <scope>NUCLEOTIDE SEQUENCE [LARGE SCALE MRNA]</scope>
    <source>
        <strain>Berkeley</strain>
        <tissue>Head</tissue>
    </source>
</reference>
<reference key="4">
    <citation type="journal article" date="2008" name="Genes Dev.">
        <title>Trabid, a new positive regulator of Wnt-induced transcription with preference for binding and cleaving K63-linked ubiquitin chains.</title>
        <authorList>
            <person name="Tran H."/>
            <person name="Hamada F."/>
            <person name="Schwarz-Romond T."/>
            <person name="Bienz M."/>
        </authorList>
    </citation>
    <scope>FUNCTION</scope>
    <scope>INTERACTION WITH APC</scope>
    <scope>DISRUPTION PHENOTYPE</scope>
</reference>
<reference key="5">
    <citation type="journal article" date="2008" name="J. Proteome Res.">
        <title>Phosphoproteome analysis of Drosophila melanogaster embryos.</title>
        <authorList>
            <person name="Zhai B."/>
            <person name="Villen J."/>
            <person name="Beausoleil S.A."/>
            <person name="Mintseris J."/>
            <person name="Gygi S.P."/>
        </authorList>
    </citation>
    <scope>PHOSPHORYLATION [LARGE SCALE ANALYSIS] AT SER-770; SER-771 AND SER-775</scope>
    <scope>IDENTIFICATION BY MASS SPECTROMETRY</scope>
    <source>
        <tissue>Embryo</tissue>
    </source>
</reference>